<evidence type="ECO:0000255" key="1">
    <source>
        <dbReference type="HAMAP-Rule" id="MF_00096"/>
    </source>
</evidence>
<keyword id="KW-0067">ATP-binding</keyword>
<keyword id="KW-0227">DNA damage</keyword>
<keyword id="KW-0234">DNA repair</keyword>
<keyword id="KW-0238">DNA-binding</keyword>
<keyword id="KW-0547">Nucleotide-binding</keyword>
<protein>
    <recommendedName>
        <fullName evidence="1">DNA mismatch repair protein MutS</fullName>
    </recommendedName>
</protein>
<feature type="chain" id="PRO_1000008071" description="DNA mismatch repair protein MutS">
    <location>
        <begin position="1"/>
        <end position="848"/>
    </location>
</feature>
<feature type="binding site" evidence="1">
    <location>
        <begin position="605"/>
        <end position="612"/>
    </location>
    <ligand>
        <name>ATP</name>
        <dbReference type="ChEBI" id="CHEBI:30616"/>
    </ligand>
</feature>
<comment type="function">
    <text evidence="1">This protein is involved in the repair of mismatches in DNA. It is possible that it carries out the mismatch recognition step. This protein has a weak ATPase activity.</text>
</comment>
<comment type="similarity">
    <text evidence="1">Belongs to the DNA mismatch repair MutS family.</text>
</comment>
<accession>Q04RT2</accession>
<proteinExistence type="inferred from homology"/>
<name>MUTS_LEPBJ</name>
<sequence length="848" mass="97354">MNLEITGTSAEYWSDLAEALNTPMMKQFLTIKKDFPDTILFFRMGDFYEMFLEDAKIASSILDIALTKRQNAVPMCGIPYHSKDNYISRLLNAGKKIAICEQSKPEETGSKLMTRDVVRIITPGTVIEENLLTGFQNNYLAVLHLKKSLIYFAMADFSTGELFYSSTPITSLEKLVAELEKFRPSEICVPQSELSFFQELEYFRDKEFTVLKDQPEIPEKDQFQILSRYLDEYIRETYRDNKLVLREPRILSSGKFLEMDRETILNLELVENGKEKNHTLYSIFNFCNTAKGKRLLKQRILFPECDPMVLYSRWEKQDILFKIVLAPFIAALRDVGDIERILTRFRGNHSYPRDFRSILNSISTGIKLKKELEALSYPFLIPLEELKVLSEFIEERLHPGDDLPVILGNGPFLKTGFSTRLDKAREAGFKGKDWILSLEAEEKKRTNLNTLKIRYNKIVGYFIEISRAQAEQAPKDYLKKQTLVGSERFTTPKLEEIERTILEADEIIQEIERAEFNRMVEEVLKYSSALLSFSEEIGDLDFQISVLIAKDKFGWIRPELSKDRSLNLVDSRHPVVEATLPPGQEFVPNSVYLDTQNQAIAVLTGPNMAGKSTFMRQIALNQILFQMGAFVPAKSARLPIVDKLFTRIGAGDNLTAGESTFYVEMKETANILNHYTEDSLILFDEVGRGTSTYDGMSIAWSILEYLSSLSVKPKTIFATHYHELTELSRLSGIFNLYLETLEKEDKVLFLRKVKVGKAKKSFGIYVAKIAGIPEPIVKRAAELLIDLESKKKEIRIQEAQPTLFIEPESKNLPSETEESILKLKLEEMTPMEALKKLEDFQKKLRKQK</sequence>
<reference key="1">
    <citation type="journal article" date="2006" name="Proc. Natl. Acad. Sci. U.S.A.">
        <title>Genome reduction in Leptospira borgpetersenii reflects limited transmission potential.</title>
        <authorList>
            <person name="Bulach D.M."/>
            <person name="Zuerner R.L."/>
            <person name="Wilson P."/>
            <person name="Seemann T."/>
            <person name="McGrath A."/>
            <person name="Cullen P.A."/>
            <person name="Davis J."/>
            <person name="Johnson M."/>
            <person name="Kuczek E."/>
            <person name="Alt D.P."/>
            <person name="Peterson-Burch B."/>
            <person name="Coppel R.L."/>
            <person name="Rood J.I."/>
            <person name="Davies J.K."/>
            <person name="Adler B."/>
        </authorList>
    </citation>
    <scope>NUCLEOTIDE SEQUENCE [LARGE SCALE GENOMIC DNA]</scope>
    <source>
        <strain>JB197</strain>
    </source>
</reference>
<gene>
    <name evidence="1" type="primary">mutS</name>
    <name type="ordered locus">LBJ_1867</name>
</gene>
<dbReference type="EMBL" id="CP000350">
    <property type="protein sequence ID" value="ABJ76388.1"/>
    <property type="molecule type" value="Genomic_DNA"/>
</dbReference>
<dbReference type="RefSeq" id="WP_011670112.1">
    <property type="nucleotide sequence ID" value="NC_008510.1"/>
</dbReference>
<dbReference type="SMR" id="Q04RT2"/>
<dbReference type="KEGG" id="lbj:LBJ_1867"/>
<dbReference type="HOGENOM" id="CLU_002472_3_1_12"/>
<dbReference type="Proteomes" id="UP000000656">
    <property type="component" value="Chromosome 1"/>
</dbReference>
<dbReference type="GO" id="GO:0005829">
    <property type="term" value="C:cytosol"/>
    <property type="evidence" value="ECO:0007669"/>
    <property type="project" value="TreeGrafter"/>
</dbReference>
<dbReference type="GO" id="GO:0005524">
    <property type="term" value="F:ATP binding"/>
    <property type="evidence" value="ECO:0007669"/>
    <property type="project" value="UniProtKB-UniRule"/>
</dbReference>
<dbReference type="GO" id="GO:0140664">
    <property type="term" value="F:ATP-dependent DNA damage sensor activity"/>
    <property type="evidence" value="ECO:0007669"/>
    <property type="project" value="InterPro"/>
</dbReference>
<dbReference type="GO" id="GO:0003684">
    <property type="term" value="F:damaged DNA binding"/>
    <property type="evidence" value="ECO:0007669"/>
    <property type="project" value="UniProtKB-UniRule"/>
</dbReference>
<dbReference type="GO" id="GO:0030983">
    <property type="term" value="F:mismatched DNA binding"/>
    <property type="evidence" value="ECO:0007669"/>
    <property type="project" value="InterPro"/>
</dbReference>
<dbReference type="GO" id="GO:0006298">
    <property type="term" value="P:mismatch repair"/>
    <property type="evidence" value="ECO:0007669"/>
    <property type="project" value="UniProtKB-UniRule"/>
</dbReference>
<dbReference type="FunFam" id="3.40.1170.10:FF:000001">
    <property type="entry name" value="DNA mismatch repair protein MutS"/>
    <property type="match status" value="1"/>
</dbReference>
<dbReference type="FunFam" id="3.40.50.300:FF:001974">
    <property type="entry name" value="DNA mismatch repair protein MutS"/>
    <property type="match status" value="1"/>
</dbReference>
<dbReference type="Gene3D" id="1.10.1420.10">
    <property type="match status" value="2"/>
</dbReference>
<dbReference type="Gene3D" id="3.40.1170.10">
    <property type="entry name" value="DNA repair protein MutS, domain I"/>
    <property type="match status" value="1"/>
</dbReference>
<dbReference type="Gene3D" id="3.30.420.110">
    <property type="entry name" value="MutS, connector domain"/>
    <property type="match status" value="1"/>
</dbReference>
<dbReference type="Gene3D" id="3.40.50.300">
    <property type="entry name" value="P-loop containing nucleotide triphosphate hydrolases"/>
    <property type="match status" value="1"/>
</dbReference>
<dbReference type="HAMAP" id="MF_00096">
    <property type="entry name" value="MutS"/>
    <property type="match status" value="1"/>
</dbReference>
<dbReference type="InterPro" id="IPR005748">
    <property type="entry name" value="DNA_mismatch_repair_MutS"/>
</dbReference>
<dbReference type="InterPro" id="IPR007695">
    <property type="entry name" value="DNA_mismatch_repair_MutS-lik_N"/>
</dbReference>
<dbReference type="InterPro" id="IPR017261">
    <property type="entry name" value="DNA_mismatch_repair_MutS/MSH"/>
</dbReference>
<dbReference type="InterPro" id="IPR000432">
    <property type="entry name" value="DNA_mismatch_repair_MutS_C"/>
</dbReference>
<dbReference type="InterPro" id="IPR007861">
    <property type="entry name" value="DNA_mismatch_repair_MutS_clamp"/>
</dbReference>
<dbReference type="InterPro" id="IPR007696">
    <property type="entry name" value="DNA_mismatch_repair_MutS_core"/>
</dbReference>
<dbReference type="InterPro" id="IPR016151">
    <property type="entry name" value="DNA_mismatch_repair_MutS_N"/>
</dbReference>
<dbReference type="InterPro" id="IPR036187">
    <property type="entry name" value="DNA_mismatch_repair_MutS_sf"/>
</dbReference>
<dbReference type="InterPro" id="IPR007860">
    <property type="entry name" value="DNA_mmatch_repair_MutS_con_dom"/>
</dbReference>
<dbReference type="InterPro" id="IPR045076">
    <property type="entry name" value="MutS"/>
</dbReference>
<dbReference type="InterPro" id="IPR036678">
    <property type="entry name" value="MutS_con_dom_sf"/>
</dbReference>
<dbReference type="InterPro" id="IPR027417">
    <property type="entry name" value="P-loop_NTPase"/>
</dbReference>
<dbReference type="NCBIfam" id="TIGR01070">
    <property type="entry name" value="mutS1"/>
    <property type="match status" value="1"/>
</dbReference>
<dbReference type="NCBIfam" id="NF003810">
    <property type="entry name" value="PRK05399.1"/>
    <property type="match status" value="1"/>
</dbReference>
<dbReference type="PANTHER" id="PTHR11361:SF34">
    <property type="entry name" value="DNA MISMATCH REPAIR PROTEIN MSH1, MITOCHONDRIAL"/>
    <property type="match status" value="1"/>
</dbReference>
<dbReference type="PANTHER" id="PTHR11361">
    <property type="entry name" value="DNA MISMATCH REPAIR PROTEIN MUTS FAMILY MEMBER"/>
    <property type="match status" value="1"/>
</dbReference>
<dbReference type="Pfam" id="PF01624">
    <property type="entry name" value="MutS_I"/>
    <property type="match status" value="1"/>
</dbReference>
<dbReference type="Pfam" id="PF05188">
    <property type="entry name" value="MutS_II"/>
    <property type="match status" value="1"/>
</dbReference>
<dbReference type="Pfam" id="PF05192">
    <property type="entry name" value="MutS_III"/>
    <property type="match status" value="1"/>
</dbReference>
<dbReference type="Pfam" id="PF05190">
    <property type="entry name" value="MutS_IV"/>
    <property type="match status" value="1"/>
</dbReference>
<dbReference type="Pfam" id="PF00488">
    <property type="entry name" value="MutS_V"/>
    <property type="match status" value="1"/>
</dbReference>
<dbReference type="PIRSF" id="PIRSF037677">
    <property type="entry name" value="DNA_mis_repair_Msh6"/>
    <property type="match status" value="1"/>
</dbReference>
<dbReference type="SMART" id="SM00534">
    <property type="entry name" value="MUTSac"/>
    <property type="match status" value="1"/>
</dbReference>
<dbReference type="SMART" id="SM00533">
    <property type="entry name" value="MUTSd"/>
    <property type="match status" value="1"/>
</dbReference>
<dbReference type="SUPFAM" id="SSF55271">
    <property type="entry name" value="DNA repair protein MutS, domain I"/>
    <property type="match status" value="1"/>
</dbReference>
<dbReference type="SUPFAM" id="SSF53150">
    <property type="entry name" value="DNA repair protein MutS, domain II"/>
    <property type="match status" value="1"/>
</dbReference>
<dbReference type="SUPFAM" id="SSF48334">
    <property type="entry name" value="DNA repair protein MutS, domain III"/>
    <property type="match status" value="1"/>
</dbReference>
<dbReference type="SUPFAM" id="SSF52540">
    <property type="entry name" value="P-loop containing nucleoside triphosphate hydrolases"/>
    <property type="match status" value="1"/>
</dbReference>
<dbReference type="PROSITE" id="PS00486">
    <property type="entry name" value="DNA_MISMATCH_REPAIR_2"/>
    <property type="match status" value="1"/>
</dbReference>
<organism>
    <name type="scientific">Leptospira borgpetersenii serovar Hardjo-bovis (strain JB197)</name>
    <dbReference type="NCBI Taxonomy" id="355277"/>
    <lineage>
        <taxon>Bacteria</taxon>
        <taxon>Pseudomonadati</taxon>
        <taxon>Spirochaetota</taxon>
        <taxon>Spirochaetia</taxon>
        <taxon>Leptospirales</taxon>
        <taxon>Leptospiraceae</taxon>
        <taxon>Leptospira</taxon>
    </lineage>
</organism>